<sequence>MVNVVVTGAAGRMGTQIVRLVAAAEGLKLTGAVERPGHAGQDAGALAGIPPLGVAVVDDLAGALAGADVVIDFTSHEASARNAELCAEKGVALVIGSTGFTPEAKARVAAAAARIPVVFSPNMSVGVNVLFELVRQAAKVLGDAYDVEIVEIHHKRKRDAPSGTAVALGEVAAGALGRDPADALAYTRHGILGERPPWQIGVQTLRGGDVVGEHTVYFCGEGERLELTHRATSREQFARGAVRAAGFIAGKPAGLYDMADVLGLRSAR</sequence>
<gene>
    <name evidence="1" type="primary">dapB</name>
    <name type="ordered locus">Anae109_0355</name>
</gene>
<evidence type="ECO:0000255" key="1">
    <source>
        <dbReference type="HAMAP-Rule" id="MF_00102"/>
    </source>
</evidence>
<evidence type="ECO:0000305" key="2"/>
<organism>
    <name type="scientific">Anaeromyxobacter sp. (strain Fw109-5)</name>
    <dbReference type="NCBI Taxonomy" id="404589"/>
    <lineage>
        <taxon>Bacteria</taxon>
        <taxon>Pseudomonadati</taxon>
        <taxon>Myxococcota</taxon>
        <taxon>Myxococcia</taxon>
        <taxon>Myxococcales</taxon>
        <taxon>Cystobacterineae</taxon>
        <taxon>Anaeromyxobacteraceae</taxon>
        <taxon>Anaeromyxobacter</taxon>
    </lineage>
</organism>
<name>DAPB_ANADF</name>
<dbReference type="EC" id="1.17.1.8" evidence="1"/>
<dbReference type="EMBL" id="CP000769">
    <property type="protein sequence ID" value="ABS24570.1"/>
    <property type="molecule type" value="Genomic_DNA"/>
</dbReference>
<dbReference type="RefSeq" id="WP_011984676.1">
    <property type="nucleotide sequence ID" value="NC_009675.1"/>
</dbReference>
<dbReference type="SMR" id="A7H774"/>
<dbReference type="STRING" id="404589.Anae109_0355"/>
<dbReference type="KEGG" id="afw:Anae109_0355"/>
<dbReference type="eggNOG" id="COG0289">
    <property type="taxonomic scope" value="Bacteria"/>
</dbReference>
<dbReference type="HOGENOM" id="CLU_047479_2_1_7"/>
<dbReference type="OrthoDB" id="9790352at2"/>
<dbReference type="UniPathway" id="UPA00034">
    <property type="reaction ID" value="UER00018"/>
</dbReference>
<dbReference type="Proteomes" id="UP000006382">
    <property type="component" value="Chromosome"/>
</dbReference>
<dbReference type="GO" id="GO:0005829">
    <property type="term" value="C:cytosol"/>
    <property type="evidence" value="ECO:0007669"/>
    <property type="project" value="TreeGrafter"/>
</dbReference>
<dbReference type="GO" id="GO:0008839">
    <property type="term" value="F:4-hydroxy-tetrahydrodipicolinate reductase"/>
    <property type="evidence" value="ECO:0007669"/>
    <property type="project" value="UniProtKB-EC"/>
</dbReference>
<dbReference type="GO" id="GO:0051287">
    <property type="term" value="F:NAD binding"/>
    <property type="evidence" value="ECO:0007669"/>
    <property type="project" value="UniProtKB-UniRule"/>
</dbReference>
<dbReference type="GO" id="GO:0050661">
    <property type="term" value="F:NADP binding"/>
    <property type="evidence" value="ECO:0007669"/>
    <property type="project" value="UniProtKB-UniRule"/>
</dbReference>
<dbReference type="GO" id="GO:0016726">
    <property type="term" value="F:oxidoreductase activity, acting on CH or CH2 groups, NAD or NADP as acceptor"/>
    <property type="evidence" value="ECO:0007669"/>
    <property type="project" value="UniProtKB-UniRule"/>
</dbReference>
<dbReference type="GO" id="GO:0019877">
    <property type="term" value="P:diaminopimelate biosynthetic process"/>
    <property type="evidence" value="ECO:0007669"/>
    <property type="project" value="UniProtKB-UniRule"/>
</dbReference>
<dbReference type="GO" id="GO:0009089">
    <property type="term" value="P:lysine biosynthetic process via diaminopimelate"/>
    <property type="evidence" value="ECO:0007669"/>
    <property type="project" value="UniProtKB-UniRule"/>
</dbReference>
<dbReference type="CDD" id="cd02274">
    <property type="entry name" value="DHDPR_N"/>
    <property type="match status" value="1"/>
</dbReference>
<dbReference type="FunFam" id="3.30.360.10:FF:000004">
    <property type="entry name" value="4-hydroxy-tetrahydrodipicolinate reductase"/>
    <property type="match status" value="1"/>
</dbReference>
<dbReference type="Gene3D" id="3.30.360.10">
    <property type="entry name" value="Dihydrodipicolinate Reductase, domain 2"/>
    <property type="match status" value="1"/>
</dbReference>
<dbReference type="Gene3D" id="3.40.50.720">
    <property type="entry name" value="NAD(P)-binding Rossmann-like Domain"/>
    <property type="match status" value="1"/>
</dbReference>
<dbReference type="HAMAP" id="MF_00102">
    <property type="entry name" value="DapB"/>
    <property type="match status" value="1"/>
</dbReference>
<dbReference type="InterPro" id="IPR022663">
    <property type="entry name" value="DapB_C"/>
</dbReference>
<dbReference type="InterPro" id="IPR000846">
    <property type="entry name" value="DapB_N"/>
</dbReference>
<dbReference type="InterPro" id="IPR022664">
    <property type="entry name" value="DapB_N_CS"/>
</dbReference>
<dbReference type="InterPro" id="IPR023940">
    <property type="entry name" value="DHDPR_bac"/>
</dbReference>
<dbReference type="InterPro" id="IPR036291">
    <property type="entry name" value="NAD(P)-bd_dom_sf"/>
</dbReference>
<dbReference type="NCBIfam" id="TIGR00036">
    <property type="entry name" value="dapB"/>
    <property type="match status" value="1"/>
</dbReference>
<dbReference type="PANTHER" id="PTHR20836:SF0">
    <property type="entry name" value="4-HYDROXY-TETRAHYDRODIPICOLINATE REDUCTASE 1, CHLOROPLASTIC-RELATED"/>
    <property type="match status" value="1"/>
</dbReference>
<dbReference type="PANTHER" id="PTHR20836">
    <property type="entry name" value="DIHYDRODIPICOLINATE REDUCTASE"/>
    <property type="match status" value="1"/>
</dbReference>
<dbReference type="Pfam" id="PF05173">
    <property type="entry name" value="DapB_C"/>
    <property type="match status" value="1"/>
</dbReference>
<dbReference type="Pfam" id="PF01113">
    <property type="entry name" value="DapB_N"/>
    <property type="match status" value="1"/>
</dbReference>
<dbReference type="PIRSF" id="PIRSF000161">
    <property type="entry name" value="DHPR"/>
    <property type="match status" value="1"/>
</dbReference>
<dbReference type="SUPFAM" id="SSF55347">
    <property type="entry name" value="Glyceraldehyde-3-phosphate dehydrogenase-like, C-terminal domain"/>
    <property type="match status" value="1"/>
</dbReference>
<dbReference type="SUPFAM" id="SSF51735">
    <property type="entry name" value="NAD(P)-binding Rossmann-fold domains"/>
    <property type="match status" value="1"/>
</dbReference>
<dbReference type="PROSITE" id="PS01298">
    <property type="entry name" value="DAPB"/>
    <property type="match status" value="1"/>
</dbReference>
<feature type="chain" id="PRO_1000008533" description="4-hydroxy-tetrahydrodipicolinate reductase">
    <location>
        <begin position="1"/>
        <end position="268"/>
    </location>
</feature>
<feature type="active site" description="Proton donor/acceptor" evidence="1">
    <location>
        <position position="153"/>
    </location>
</feature>
<feature type="active site" description="Proton donor" evidence="1">
    <location>
        <position position="157"/>
    </location>
</feature>
<feature type="binding site" evidence="1">
    <location>
        <begin position="8"/>
        <end position="13"/>
    </location>
    <ligand>
        <name>NAD(+)</name>
        <dbReference type="ChEBI" id="CHEBI:57540"/>
    </ligand>
</feature>
<feature type="binding site" evidence="1">
    <location>
        <position position="34"/>
    </location>
    <ligand>
        <name>NAD(+)</name>
        <dbReference type="ChEBI" id="CHEBI:57540"/>
    </ligand>
</feature>
<feature type="binding site" evidence="1">
    <location>
        <position position="35"/>
    </location>
    <ligand>
        <name>NADP(+)</name>
        <dbReference type="ChEBI" id="CHEBI:58349"/>
    </ligand>
</feature>
<feature type="binding site" evidence="1">
    <location>
        <begin position="96"/>
        <end position="98"/>
    </location>
    <ligand>
        <name>NAD(+)</name>
        <dbReference type="ChEBI" id="CHEBI:57540"/>
    </ligand>
</feature>
<feature type="binding site" evidence="1">
    <location>
        <begin position="120"/>
        <end position="123"/>
    </location>
    <ligand>
        <name>NAD(+)</name>
        <dbReference type="ChEBI" id="CHEBI:57540"/>
    </ligand>
</feature>
<feature type="binding site" evidence="1">
    <location>
        <position position="154"/>
    </location>
    <ligand>
        <name>(S)-2,3,4,5-tetrahydrodipicolinate</name>
        <dbReference type="ChEBI" id="CHEBI:16845"/>
    </ligand>
</feature>
<feature type="binding site" evidence="1">
    <location>
        <begin position="163"/>
        <end position="164"/>
    </location>
    <ligand>
        <name>(S)-2,3,4,5-tetrahydrodipicolinate</name>
        <dbReference type="ChEBI" id="CHEBI:16845"/>
    </ligand>
</feature>
<proteinExistence type="inferred from homology"/>
<keyword id="KW-0028">Amino-acid biosynthesis</keyword>
<keyword id="KW-0963">Cytoplasm</keyword>
<keyword id="KW-0220">Diaminopimelate biosynthesis</keyword>
<keyword id="KW-0457">Lysine biosynthesis</keyword>
<keyword id="KW-0520">NAD</keyword>
<keyword id="KW-0521">NADP</keyword>
<keyword id="KW-0560">Oxidoreductase</keyword>
<keyword id="KW-1185">Reference proteome</keyword>
<accession>A7H774</accession>
<comment type="function">
    <text evidence="1">Catalyzes the conversion of 4-hydroxy-tetrahydrodipicolinate (HTPA) to tetrahydrodipicolinate.</text>
</comment>
<comment type="catalytic activity">
    <reaction evidence="1">
        <text>(S)-2,3,4,5-tetrahydrodipicolinate + NAD(+) + H2O = (2S,4S)-4-hydroxy-2,3,4,5-tetrahydrodipicolinate + NADH + H(+)</text>
        <dbReference type="Rhea" id="RHEA:35323"/>
        <dbReference type="ChEBI" id="CHEBI:15377"/>
        <dbReference type="ChEBI" id="CHEBI:15378"/>
        <dbReference type="ChEBI" id="CHEBI:16845"/>
        <dbReference type="ChEBI" id="CHEBI:57540"/>
        <dbReference type="ChEBI" id="CHEBI:57945"/>
        <dbReference type="ChEBI" id="CHEBI:67139"/>
        <dbReference type="EC" id="1.17.1.8"/>
    </reaction>
</comment>
<comment type="catalytic activity">
    <reaction evidence="1">
        <text>(S)-2,3,4,5-tetrahydrodipicolinate + NADP(+) + H2O = (2S,4S)-4-hydroxy-2,3,4,5-tetrahydrodipicolinate + NADPH + H(+)</text>
        <dbReference type="Rhea" id="RHEA:35331"/>
        <dbReference type="ChEBI" id="CHEBI:15377"/>
        <dbReference type="ChEBI" id="CHEBI:15378"/>
        <dbReference type="ChEBI" id="CHEBI:16845"/>
        <dbReference type="ChEBI" id="CHEBI:57783"/>
        <dbReference type="ChEBI" id="CHEBI:58349"/>
        <dbReference type="ChEBI" id="CHEBI:67139"/>
        <dbReference type="EC" id="1.17.1.8"/>
    </reaction>
</comment>
<comment type="pathway">
    <text evidence="1">Amino-acid biosynthesis; L-lysine biosynthesis via DAP pathway; (S)-tetrahydrodipicolinate from L-aspartate: step 4/4.</text>
</comment>
<comment type="subcellular location">
    <subcellularLocation>
        <location evidence="1">Cytoplasm</location>
    </subcellularLocation>
</comment>
<comment type="similarity">
    <text evidence="1">Belongs to the DapB family.</text>
</comment>
<comment type="caution">
    <text evidence="2">Was originally thought to be a dihydrodipicolinate reductase (DHDPR), catalyzing the conversion of dihydrodipicolinate to tetrahydrodipicolinate. However, it was shown in E.coli that the substrate of the enzymatic reaction is not dihydrodipicolinate (DHDP) but in fact (2S,4S)-4-hydroxy-2,3,4,5-tetrahydrodipicolinic acid (HTPA), the product released by the DapA-catalyzed reaction.</text>
</comment>
<protein>
    <recommendedName>
        <fullName evidence="1">4-hydroxy-tetrahydrodipicolinate reductase</fullName>
        <shortName evidence="1">HTPA reductase</shortName>
        <ecNumber evidence="1">1.17.1.8</ecNumber>
    </recommendedName>
</protein>
<reference key="1">
    <citation type="journal article" date="2015" name="Genome Announc.">
        <title>Complete genome sequence of Anaeromyxobacter sp. Fw109-5, an anaerobic, metal-reducing bacterium isolated from a contaminated subsurface environment.</title>
        <authorList>
            <person name="Hwang C."/>
            <person name="Copeland A."/>
            <person name="Lucas S."/>
            <person name="Lapidus A."/>
            <person name="Barry K."/>
            <person name="Glavina Del Rio T."/>
            <person name="Dalin E."/>
            <person name="Tice H."/>
            <person name="Pitluck S."/>
            <person name="Sims D."/>
            <person name="Brettin T."/>
            <person name="Bruce D.C."/>
            <person name="Detter J.C."/>
            <person name="Han C.S."/>
            <person name="Schmutz J."/>
            <person name="Larimer F.W."/>
            <person name="Land M.L."/>
            <person name="Hauser L.J."/>
            <person name="Kyrpides N."/>
            <person name="Lykidis A."/>
            <person name="Richardson P."/>
            <person name="Belieav A."/>
            <person name="Sanford R.A."/>
            <person name="Loeffler F.E."/>
            <person name="Fields M.W."/>
        </authorList>
    </citation>
    <scope>NUCLEOTIDE SEQUENCE [LARGE SCALE GENOMIC DNA]</scope>
    <source>
        <strain>Fw109-5</strain>
    </source>
</reference>